<dbReference type="EMBL" id="CP000323">
    <property type="protein sequence ID" value="ABE76093.1"/>
    <property type="status" value="ALT_INIT"/>
    <property type="molecule type" value="Genomic_DNA"/>
</dbReference>
<dbReference type="RefSeq" id="WP_041753276.1">
    <property type="nucleotide sequence ID" value="NC_007969.1"/>
</dbReference>
<dbReference type="SMR" id="Q1Q8B0"/>
<dbReference type="STRING" id="335284.Pcryo_2316"/>
<dbReference type="KEGG" id="pcr:Pcryo_2316"/>
<dbReference type="eggNOG" id="COG0322">
    <property type="taxonomic scope" value="Bacteria"/>
</dbReference>
<dbReference type="HOGENOM" id="CLU_014841_3_0_6"/>
<dbReference type="Proteomes" id="UP000002425">
    <property type="component" value="Chromosome"/>
</dbReference>
<dbReference type="GO" id="GO:0005737">
    <property type="term" value="C:cytoplasm"/>
    <property type="evidence" value="ECO:0007669"/>
    <property type="project" value="UniProtKB-SubCell"/>
</dbReference>
<dbReference type="GO" id="GO:0009380">
    <property type="term" value="C:excinuclease repair complex"/>
    <property type="evidence" value="ECO:0007669"/>
    <property type="project" value="InterPro"/>
</dbReference>
<dbReference type="GO" id="GO:0003677">
    <property type="term" value="F:DNA binding"/>
    <property type="evidence" value="ECO:0007669"/>
    <property type="project" value="UniProtKB-UniRule"/>
</dbReference>
<dbReference type="GO" id="GO:0009381">
    <property type="term" value="F:excinuclease ABC activity"/>
    <property type="evidence" value="ECO:0007669"/>
    <property type="project" value="UniProtKB-UniRule"/>
</dbReference>
<dbReference type="GO" id="GO:0006289">
    <property type="term" value="P:nucleotide-excision repair"/>
    <property type="evidence" value="ECO:0007669"/>
    <property type="project" value="UniProtKB-UniRule"/>
</dbReference>
<dbReference type="GO" id="GO:0009432">
    <property type="term" value="P:SOS response"/>
    <property type="evidence" value="ECO:0007669"/>
    <property type="project" value="UniProtKB-UniRule"/>
</dbReference>
<dbReference type="CDD" id="cd10434">
    <property type="entry name" value="GIY-YIG_UvrC_Cho"/>
    <property type="match status" value="1"/>
</dbReference>
<dbReference type="FunFam" id="3.30.420.340:FF:000001">
    <property type="entry name" value="UvrABC system protein C"/>
    <property type="match status" value="1"/>
</dbReference>
<dbReference type="FunFam" id="3.40.1440.10:FF:000001">
    <property type="entry name" value="UvrABC system protein C"/>
    <property type="match status" value="1"/>
</dbReference>
<dbReference type="Gene3D" id="1.10.150.20">
    <property type="entry name" value="5' to 3' exonuclease, C-terminal subdomain"/>
    <property type="match status" value="1"/>
</dbReference>
<dbReference type="Gene3D" id="3.40.1440.10">
    <property type="entry name" value="GIY-YIG endonuclease"/>
    <property type="match status" value="1"/>
</dbReference>
<dbReference type="Gene3D" id="4.10.860.10">
    <property type="entry name" value="UVR domain"/>
    <property type="match status" value="1"/>
</dbReference>
<dbReference type="Gene3D" id="3.30.420.340">
    <property type="entry name" value="UvrC, RNAse H endonuclease domain"/>
    <property type="match status" value="1"/>
</dbReference>
<dbReference type="HAMAP" id="MF_00203">
    <property type="entry name" value="UvrC"/>
    <property type="match status" value="1"/>
</dbReference>
<dbReference type="InterPro" id="IPR041663">
    <property type="entry name" value="DisA/LigA_HHH"/>
</dbReference>
<dbReference type="InterPro" id="IPR000305">
    <property type="entry name" value="GIY-YIG_endonuc"/>
</dbReference>
<dbReference type="InterPro" id="IPR035901">
    <property type="entry name" value="GIY-YIG_endonuc_sf"/>
</dbReference>
<dbReference type="InterPro" id="IPR047296">
    <property type="entry name" value="GIY-YIG_UvrC_Cho"/>
</dbReference>
<dbReference type="InterPro" id="IPR003583">
    <property type="entry name" value="Hlx-hairpin-Hlx_DNA-bd_motif"/>
</dbReference>
<dbReference type="InterPro" id="IPR010994">
    <property type="entry name" value="RuvA_2-like"/>
</dbReference>
<dbReference type="InterPro" id="IPR001943">
    <property type="entry name" value="UVR_dom"/>
</dbReference>
<dbReference type="InterPro" id="IPR036876">
    <property type="entry name" value="UVR_dom_sf"/>
</dbReference>
<dbReference type="InterPro" id="IPR050066">
    <property type="entry name" value="UvrABC_protein_C"/>
</dbReference>
<dbReference type="InterPro" id="IPR004791">
    <property type="entry name" value="UvrC"/>
</dbReference>
<dbReference type="InterPro" id="IPR001162">
    <property type="entry name" value="UvrC_RNase_H_dom"/>
</dbReference>
<dbReference type="InterPro" id="IPR038476">
    <property type="entry name" value="UvrC_RNase_H_dom_sf"/>
</dbReference>
<dbReference type="NCBIfam" id="TIGR00194">
    <property type="entry name" value="uvrC"/>
    <property type="match status" value="1"/>
</dbReference>
<dbReference type="PANTHER" id="PTHR30562:SF1">
    <property type="entry name" value="UVRABC SYSTEM PROTEIN C"/>
    <property type="match status" value="1"/>
</dbReference>
<dbReference type="PANTHER" id="PTHR30562">
    <property type="entry name" value="UVRC/OXIDOREDUCTASE"/>
    <property type="match status" value="1"/>
</dbReference>
<dbReference type="Pfam" id="PF01541">
    <property type="entry name" value="GIY-YIG"/>
    <property type="match status" value="1"/>
</dbReference>
<dbReference type="Pfam" id="PF12826">
    <property type="entry name" value="HHH_2"/>
    <property type="match status" value="1"/>
</dbReference>
<dbReference type="Pfam" id="PF02151">
    <property type="entry name" value="UVR"/>
    <property type="match status" value="1"/>
</dbReference>
<dbReference type="Pfam" id="PF22920">
    <property type="entry name" value="UvrC_RNaseH"/>
    <property type="match status" value="1"/>
</dbReference>
<dbReference type="Pfam" id="PF08459">
    <property type="entry name" value="UvrC_RNaseH_dom"/>
    <property type="match status" value="1"/>
</dbReference>
<dbReference type="SMART" id="SM00465">
    <property type="entry name" value="GIYc"/>
    <property type="match status" value="1"/>
</dbReference>
<dbReference type="SMART" id="SM00278">
    <property type="entry name" value="HhH1"/>
    <property type="match status" value="2"/>
</dbReference>
<dbReference type="SUPFAM" id="SSF46600">
    <property type="entry name" value="C-terminal UvrC-binding domain of UvrB"/>
    <property type="match status" value="1"/>
</dbReference>
<dbReference type="SUPFAM" id="SSF82771">
    <property type="entry name" value="GIY-YIG endonuclease"/>
    <property type="match status" value="1"/>
</dbReference>
<dbReference type="SUPFAM" id="SSF47781">
    <property type="entry name" value="RuvA domain 2-like"/>
    <property type="match status" value="1"/>
</dbReference>
<dbReference type="PROSITE" id="PS50164">
    <property type="entry name" value="GIY_YIG"/>
    <property type="match status" value="1"/>
</dbReference>
<dbReference type="PROSITE" id="PS50151">
    <property type="entry name" value="UVR"/>
    <property type="match status" value="1"/>
</dbReference>
<dbReference type="PROSITE" id="PS50165">
    <property type="entry name" value="UVRC"/>
    <property type="match status" value="1"/>
</dbReference>
<comment type="function">
    <text evidence="1">The UvrABC repair system catalyzes the recognition and processing of DNA lesions. UvrC both incises the 5' and 3' sides of the lesion. The N-terminal half is responsible for the 3' incision and the C-terminal half is responsible for the 5' incision.</text>
</comment>
<comment type="subunit">
    <text evidence="1">Interacts with UvrB in an incision complex.</text>
</comment>
<comment type="subcellular location">
    <subcellularLocation>
        <location evidence="1">Cytoplasm</location>
    </subcellularLocation>
</comment>
<comment type="similarity">
    <text evidence="1">Belongs to the UvrC family.</text>
</comment>
<comment type="sequence caution" evidence="2">
    <conflict type="erroneous initiation">
        <sequence resource="EMBL-CDS" id="ABE76093"/>
    </conflict>
</comment>
<name>UVRC_PSYCK</name>
<gene>
    <name evidence="1" type="primary">uvrC</name>
    <name type="ordered locus">Pcryo_2316</name>
</gene>
<sequence>MVNVSESSPIDDKKARLKHLIQRLPNLPGVYKMLGKNGDILYVGKAKSLKSRVNSYFAKTIDHPKTRALVARIHNIETIITRSETEALLLEQNLIKEYRPPYNVLLRDDKSYLYVFISADKPYPRLAYGRGKGNHQKGRFFGPFPSAHAAKETLVLMQKMFQMRQCTNTFFKQRKRPCLEYQIKRCRAPCVGLVSPEEYSEDVNNTIRFLKGDSSDIHTALIEKMEASAEELDFEKAVFYRDQLSMLREVQAKQAVYTVQGEADVIAIASQGGMTCVNVLTVRGGRVLGGKNYFPDVDSSEPLADNLSAFITSFYFQVTDDLPAEIILSDELPDQLAVSEALATHFGSKVVIKTSVREHRAEWLDLAKLNTNNALKTKLGDYLELHARFGALKDVLTEVTDRTIDRIECFDISHTMGEATIGSCVVFDQGGSRRRDYRQYAIHDIVGGDDYAAMKQVLTRRYKKQPLPDLLLIDGGKGQLGIAKEVLTELGILGDTLLISVAKGEGRKAGLEVLHFIDHEPLDLPMDSKALHLLMHIRDEAHRFAITAHRKKRDKRRSSSVLEVIPGLGEKRRRDLLNHFGGMQQLLGASQQELAGVQGIGPVLAKTVYKVLHE</sequence>
<accession>Q1Q8B0</accession>
<reference key="1">
    <citation type="submission" date="2006-03" db="EMBL/GenBank/DDBJ databases">
        <title>Complete sequence of chromosome of Psychrobacter cryohalolentis K5.</title>
        <authorList>
            <consortium name="US DOE Joint Genome Institute"/>
            <person name="Copeland A."/>
            <person name="Lucas S."/>
            <person name="Lapidus A."/>
            <person name="Barry K."/>
            <person name="Detter J.C."/>
            <person name="Glavina T."/>
            <person name="Hammon N."/>
            <person name="Israni S."/>
            <person name="Dalin E."/>
            <person name="Tice H."/>
            <person name="Pitluck S."/>
            <person name="Brettin T."/>
            <person name="Bruce D."/>
            <person name="Han C."/>
            <person name="Tapia R."/>
            <person name="Sims D.R."/>
            <person name="Gilna P."/>
            <person name="Schmutz J."/>
            <person name="Larimer F."/>
            <person name="Land M."/>
            <person name="Hauser L."/>
            <person name="Kyrpides N."/>
            <person name="Kim E."/>
            <person name="Richardson P."/>
        </authorList>
    </citation>
    <scope>NUCLEOTIDE SEQUENCE [LARGE SCALE GENOMIC DNA]</scope>
    <source>
        <strain>ATCC BAA-1226 / DSM 17306 / VKM B-2378 / K5</strain>
    </source>
</reference>
<keyword id="KW-0963">Cytoplasm</keyword>
<keyword id="KW-0227">DNA damage</keyword>
<keyword id="KW-0228">DNA excision</keyword>
<keyword id="KW-0234">DNA repair</keyword>
<keyword id="KW-0267">Excision nuclease</keyword>
<keyword id="KW-0742">SOS response</keyword>
<proteinExistence type="inferred from homology"/>
<feature type="chain" id="PRO_0000264928" description="UvrABC system protein C">
    <location>
        <begin position="1"/>
        <end position="614"/>
    </location>
</feature>
<feature type="domain" description="GIY-YIG" evidence="1">
    <location>
        <begin position="26"/>
        <end position="104"/>
    </location>
</feature>
<feature type="domain" description="UVR" evidence="1">
    <location>
        <begin position="215"/>
        <end position="250"/>
    </location>
</feature>
<protein>
    <recommendedName>
        <fullName evidence="1">UvrABC system protein C</fullName>
        <shortName evidence="1">Protein UvrC</shortName>
    </recommendedName>
    <alternativeName>
        <fullName evidence="1">Excinuclease ABC subunit C</fullName>
    </alternativeName>
</protein>
<organism>
    <name type="scientific">Psychrobacter cryohalolentis (strain ATCC BAA-1226 / DSM 17306 / VKM B-2378 / K5)</name>
    <dbReference type="NCBI Taxonomy" id="335284"/>
    <lineage>
        <taxon>Bacteria</taxon>
        <taxon>Pseudomonadati</taxon>
        <taxon>Pseudomonadota</taxon>
        <taxon>Gammaproteobacteria</taxon>
        <taxon>Moraxellales</taxon>
        <taxon>Moraxellaceae</taxon>
        <taxon>Psychrobacter</taxon>
    </lineage>
</organism>
<evidence type="ECO:0000255" key="1">
    <source>
        <dbReference type="HAMAP-Rule" id="MF_00203"/>
    </source>
</evidence>
<evidence type="ECO:0000305" key="2"/>